<name>GLYA_RICPR</name>
<sequence>MNILNNNLYEMDKEIYEIIKNEKIRQNNVIELIASENFVSSAVLEAQGSILTNKYAEGYPSKRFYNGCDEVDKAEVLAIERIKKLFNCKYANVQPHSGSQANQTVYLALLQPCDTILGMSLDSGGHLTHGAAPNISGKWFNTVSYHVDQETYLIDYDEVERLAVLHNPKLLIAGFSAYPRKIDFAKFRKIADKVGAYLMADIAHIAGLVATGEHQSPIPYAHVVTSTTHKTLRGPRGGLILSDDEEIGKKINSALFPGLQGGPLMHIIAAKAVAFLENLQPEYKNYIKQVISNAKALAISLQERGYDILTGGTDNHIVLVDLRKDGITGKCAANSLDRAGITCNKNAIPFDTTSPFITSGIRFGTPACTTKGFKEKDFVLIGHMVAEILDGLKHNEDNSKTEQKVLSEVKKLMKLFPFYD</sequence>
<comment type="function">
    <text evidence="1">Catalyzes the reversible interconversion of serine and glycine with tetrahydrofolate (THF) serving as the one-carbon carrier. This reaction serves as the major source of one-carbon groups required for the biosynthesis of purines, thymidylate, methionine, and other important biomolecules. Also exhibits THF-independent aldolase activity toward beta-hydroxyamino acids, producing glycine and aldehydes, via a retro-aldol mechanism.</text>
</comment>
<comment type="catalytic activity">
    <reaction evidence="1">
        <text>(6R)-5,10-methylene-5,6,7,8-tetrahydrofolate + glycine + H2O = (6S)-5,6,7,8-tetrahydrofolate + L-serine</text>
        <dbReference type="Rhea" id="RHEA:15481"/>
        <dbReference type="ChEBI" id="CHEBI:15377"/>
        <dbReference type="ChEBI" id="CHEBI:15636"/>
        <dbReference type="ChEBI" id="CHEBI:33384"/>
        <dbReference type="ChEBI" id="CHEBI:57305"/>
        <dbReference type="ChEBI" id="CHEBI:57453"/>
        <dbReference type="EC" id="2.1.2.1"/>
    </reaction>
</comment>
<comment type="cofactor">
    <cofactor evidence="1">
        <name>pyridoxal 5'-phosphate</name>
        <dbReference type="ChEBI" id="CHEBI:597326"/>
    </cofactor>
</comment>
<comment type="pathway">
    <text evidence="1">One-carbon metabolism; tetrahydrofolate interconversion.</text>
</comment>
<comment type="pathway">
    <text evidence="1">Amino-acid biosynthesis; glycine biosynthesis; glycine from L-serine: step 1/1.</text>
</comment>
<comment type="subunit">
    <text evidence="1">Homodimer.</text>
</comment>
<comment type="subcellular location">
    <subcellularLocation>
        <location evidence="1">Cytoplasm</location>
    </subcellularLocation>
</comment>
<comment type="similarity">
    <text evidence="1">Belongs to the SHMT family.</text>
</comment>
<organism>
    <name type="scientific">Rickettsia prowazekii (strain Madrid E)</name>
    <dbReference type="NCBI Taxonomy" id="272947"/>
    <lineage>
        <taxon>Bacteria</taxon>
        <taxon>Pseudomonadati</taxon>
        <taxon>Pseudomonadota</taxon>
        <taxon>Alphaproteobacteria</taxon>
        <taxon>Rickettsiales</taxon>
        <taxon>Rickettsiaceae</taxon>
        <taxon>Rickettsieae</taxon>
        <taxon>Rickettsia</taxon>
        <taxon>typhus group</taxon>
    </lineage>
</organism>
<feature type="chain" id="PRO_0000113654" description="Serine hydroxymethyltransferase">
    <location>
        <begin position="1"/>
        <end position="420"/>
    </location>
</feature>
<feature type="binding site" evidence="1">
    <location>
        <position position="121"/>
    </location>
    <ligand>
        <name>(6S)-5,6,7,8-tetrahydrofolate</name>
        <dbReference type="ChEBI" id="CHEBI:57453"/>
    </ligand>
</feature>
<feature type="binding site" evidence="1">
    <location>
        <begin position="125"/>
        <end position="127"/>
    </location>
    <ligand>
        <name>(6S)-5,6,7,8-tetrahydrofolate</name>
        <dbReference type="ChEBI" id="CHEBI:57453"/>
    </ligand>
</feature>
<feature type="binding site" evidence="1">
    <location>
        <position position="246"/>
    </location>
    <ligand>
        <name>(6S)-5,6,7,8-tetrahydrofolate</name>
        <dbReference type="ChEBI" id="CHEBI:57453"/>
    </ligand>
</feature>
<feature type="binding site" evidence="1">
    <location>
        <begin position="354"/>
        <end position="356"/>
    </location>
    <ligand>
        <name>(6S)-5,6,7,8-tetrahydrofolate</name>
        <dbReference type="ChEBI" id="CHEBI:57453"/>
    </ligand>
</feature>
<feature type="site" description="Plays an important role in substrate specificity" evidence="1">
    <location>
        <position position="229"/>
    </location>
</feature>
<feature type="modified residue" description="N6-(pyridoxal phosphate)lysine" evidence="1">
    <location>
        <position position="230"/>
    </location>
</feature>
<keyword id="KW-0028">Amino-acid biosynthesis</keyword>
<keyword id="KW-0963">Cytoplasm</keyword>
<keyword id="KW-0554">One-carbon metabolism</keyword>
<keyword id="KW-0663">Pyridoxal phosphate</keyword>
<keyword id="KW-1185">Reference proteome</keyword>
<keyword id="KW-0808">Transferase</keyword>
<accession>O08370</accession>
<reference key="1">
    <citation type="journal article" date="1997" name="Microbiology">
        <title>Genomic rearrangements during evolution of the obligate intracellular parasite Rickettsia prowazekii as inferred from an analysis of 52015 bp nucleotide sequence.</title>
        <authorList>
            <person name="Andersson J.O."/>
            <person name="Andersson S.G.E."/>
        </authorList>
    </citation>
    <scope>NUCLEOTIDE SEQUENCE [GENOMIC DNA]</scope>
    <source>
        <strain>Madrid E</strain>
    </source>
</reference>
<reference key="2">
    <citation type="journal article" date="1998" name="Nature">
        <title>The genome sequence of Rickettsia prowazekii and the origin of mitochondria.</title>
        <authorList>
            <person name="Andersson S.G.E."/>
            <person name="Zomorodipour A."/>
            <person name="Andersson J.O."/>
            <person name="Sicheritz-Ponten T."/>
            <person name="Alsmark U.C.M."/>
            <person name="Podowski R.M."/>
            <person name="Naeslund A.K."/>
            <person name="Eriksson A.-S."/>
            <person name="Winkler H.H."/>
            <person name="Kurland C.G."/>
        </authorList>
    </citation>
    <scope>NUCLEOTIDE SEQUENCE [LARGE SCALE GENOMIC DNA]</scope>
    <source>
        <strain>Madrid E</strain>
    </source>
</reference>
<protein>
    <recommendedName>
        <fullName evidence="1">Serine hydroxymethyltransferase</fullName>
        <shortName evidence="1">SHMT</shortName>
        <shortName evidence="1">Serine methylase</shortName>
        <ecNumber evidence="1">2.1.2.1</ecNumber>
    </recommendedName>
</protein>
<evidence type="ECO:0000255" key="1">
    <source>
        <dbReference type="HAMAP-Rule" id="MF_00051"/>
    </source>
</evidence>
<dbReference type="EC" id="2.1.2.1" evidence="1"/>
<dbReference type="EMBL" id="Y11778">
    <property type="protein sequence ID" value="CAA72453.1"/>
    <property type="molecule type" value="Genomic_DNA"/>
</dbReference>
<dbReference type="EMBL" id="AJ235273">
    <property type="protein sequence ID" value="CAA15171.1"/>
    <property type="molecule type" value="Genomic_DNA"/>
</dbReference>
<dbReference type="PIR" id="C71634">
    <property type="entry name" value="C71634"/>
</dbReference>
<dbReference type="RefSeq" id="NP_221095.1">
    <property type="nucleotide sequence ID" value="NC_000963.1"/>
</dbReference>
<dbReference type="RefSeq" id="WP_004597016.1">
    <property type="nucleotide sequence ID" value="NC_000963.1"/>
</dbReference>
<dbReference type="SMR" id="O08370"/>
<dbReference type="STRING" id="272947.gene:17555813"/>
<dbReference type="EnsemblBacteria" id="CAA15171">
    <property type="protein sequence ID" value="CAA15171"/>
    <property type="gene ID" value="CAA15171"/>
</dbReference>
<dbReference type="GeneID" id="57569864"/>
<dbReference type="KEGG" id="rpr:RP743"/>
<dbReference type="PATRIC" id="fig|272947.5.peg.776"/>
<dbReference type="eggNOG" id="COG0112">
    <property type="taxonomic scope" value="Bacteria"/>
</dbReference>
<dbReference type="HOGENOM" id="CLU_022477_2_1_5"/>
<dbReference type="OrthoDB" id="9803846at2"/>
<dbReference type="UniPathway" id="UPA00193"/>
<dbReference type="UniPathway" id="UPA00288">
    <property type="reaction ID" value="UER01023"/>
</dbReference>
<dbReference type="Proteomes" id="UP000002480">
    <property type="component" value="Chromosome"/>
</dbReference>
<dbReference type="GO" id="GO:0005829">
    <property type="term" value="C:cytosol"/>
    <property type="evidence" value="ECO:0007669"/>
    <property type="project" value="TreeGrafter"/>
</dbReference>
<dbReference type="GO" id="GO:0004372">
    <property type="term" value="F:glycine hydroxymethyltransferase activity"/>
    <property type="evidence" value="ECO:0007669"/>
    <property type="project" value="UniProtKB-UniRule"/>
</dbReference>
<dbReference type="GO" id="GO:0030170">
    <property type="term" value="F:pyridoxal phosphate binding"/>
    <property type="evidence" value="ECO:0007669"/>
    <property type="project" value="UniProtKB-UniRule"/>
</dbReference>
<dbReference type="GO" id="GO:0019264">
    <property type="term" value="P:glycine biosynthetic process from serine"/>
    <property type="evidence" value="ECO:0007669"/>
    <property type="project" value="UniProtKB-UniRule"/>
</dbReference>
<dbReference type="GO" id="GO:0035999">
    <property type="term" value="P:tetrahydrofolate interconversion"/>
    <property type="evidence" value="ECO:0007669"/>
    <property type="project" value="UniProtKB-UniRule"/>
</dbReference>
<dbReference type="CDD" id="cd00378">
    <property type="entry name" value="SHMT"/>
    <property type="match status" value="1"/>
</dbReference>
<dbReference type="FunFam" id="3.40.640.10:FF:000001">
    <property type="entry name" value="Serine hydroxymethyltransferase"/>
    <property type="match status" value="1"/>
</dbReference>
<dbReference type="Gene3D" id="3.90.1150.10">
    <property type="entry name" value="Aspartate Aminotransferase, domain 1"/>
    <property type="match status" value="1"/>
</dbReference>
<dbReference type="Gene3D" id="3.40.640.10">
    <property type="entry name" value="Type I PLP-dependent aspartate aminotransferase-like (Major domain)"/>
    <property type="match status" value="1"/>
</dbReference>
<dbReference type="HAMAP" id="MF_00051">
    <property type="entry name" value="SHMT"/>
    <property type="match status" value="1"/>
</dbReference>
<dbReference type="InterPro" id="IPR015424">
    <property type="entry name" value="PyrdxlP-dep_Trfase"/>
</dbReference>
<dbReference type="InterPro" id="IPR015421">
    <property type="entry name" value="PyrdxlP-dep_Trfase_major"/>
</dbReference>
<dbReference type="InterPro" id="IPR015422">
    <property type="entry name" value="PyrdxlP-dep_Trfase_small"/>
</dbReference>
<dbReference type="InterPro" id="IPR001085">
    <property type="entry name" value="Ser_HO-MeTrfase"/>
</dbReference>
<dbReference type="InterPro" id="IPR049943">
    <property type="entry name" value="Ser_HO-MeTrfase-like"/>
</dbReference>
<dbReference type="InterPro" id="IPR019798">
    <property type="entry name" value="Ser_HO-MeTrfase_PLP_BS"/>
</dbReference>
<dbReference type="InterPro" id="IPR039429">
    <property type="entry name" value="SHMT-like_dom"/>
</dbReference>
<dbReference type="NCBIfam" id="NF000586">
    <property type="entry name" value="PRK00011.1"/>
    <property type="match status" value="1"/>
</dbReference>
<dbReference type="PANTHER" id="PTHR11680">
    <property type="entry name" value="SERINE HYDROXYMETHYLTRANSFERASE"/>
    <property type="match status" value="1"/>
</dbReference>
<dbReference type="PANTHER" id="PTHR11680:SF35">
    <property type="entry name" value="SERINE HYDROXYMETHYLTRANSFERASE 1"/>
    <property type="match status" value="1"/>
</dbReference>
<dbReference type="Pfam" id="PF00464">
    <property type="entry name" value="SHMT"/>
    <property type="match status" value="1"/>
</dbReference>
<dbReference type="PIRSF" id="PIRSF000412">
    <property type="entry name" value="SHMT"/>
    <property type="match status" value="1"/>
</dbReference>
<dbReference type="SUPFAM" id="SSF53383">
    <property type="entry name" value="PLP-dependent transferases"/>
    <property type="match status" value="1"/>
</dbReference>
<dbReference type="PROSITE" id="PS00096">
    <property type="entry name" value="SHMT"/>
    <property type="match status" value="1"/>
</dbReference>
<gene>
    <name evidence="1" type="primary">glyA</name>
    <name type="ordered locus">RP743</name>
</gene>
<proteinExistence type="inferred from homology"/>